<protein>
    <recommendedName>
        <fullName evidence="1">UPF0178 protein PLES_56411</fullName>
    </recommendedName>
</protein>
<comment type="similarity">
    <text evidence="1">Belongs to the UPF0178 family.</text>
</comment>
<feature type="chain" id="PRO_1000126203" description="UPF0178 protein PLES_56411">
    <location>
        <begin position="1"/>
        <end position="160"/>
    </location>
</feature>
<proteinExistence type="inferred from homology"/>
<name>Y5641_PSEA8</name>
<reference key="1">
    <citation type="journal article" date="2009" name="Genome Res.">
        <title>Newly introduced genomic prophage islands are critical determinants of in vivo competitiveness in the Liverpool epidemic strain of Pseudomonas aeruginosa.</title>
        <authorList>
            <person name="Winstanley C."/>
            <person name="Langille M.G.I."/>
            <person name="Fothergill J.L."/>
            <person name="Kukavica-Ibrulj I."/>
            <person name="Paradis-Bleau C."/>
            <person name="Sanschagrin F."/>
            <person name="Thomson N.R."/>
            <person name="Winsor G.L."/>
            <person name="Quail M.A."/>
            <person name="Lennard N."/>
            <person name="Bignell A."/>
            <person name="Clarke L."/>
            <person name="Seeger K."/>
            <person name="Saunders D."/>
            <person name="Harris D."/>
            <person name="Parkhill J."/>
            <person name="Hancock R.E.W."/>
            <person name="Brinkman F.S.L."/>
            <person name="Levesque R.C."/>
        </authorList>
    </citation>
    <scope>NUCLEOTIDE SEQUENCE [LARGE SCALE GENOMIC DNA]</scope>
    <source>
        <strain>LESB58</strain>
    </source>
</reference>
<sequence length="160" mass="17842">MRIWIDADACPKVAKELVCKFALKRKLEVWMVAGQPQVKPPFACVHLVVVESGMDAADDYLVEQAEPGDLAICSDVPLADRLIKKQVAALDPRGREFDARNMGDKLAMRNLMADLRDQGQMGGGQAPYGERDRQAFANALDRLLTRLQREADLRASQPHR</sequence>
<evidence type="ECO:0000255" key="1">
    <source>
        <dbReference type="HAMAP-Rule" id="MF_00489"/>
    </source>
</evidence>
<accession>B7V5D7</accession>
<dbReference type="EMBL" id="FM209186">
    <property type="protein sequence ID" value="CAW30395.1"/>
    <property type="molecule type" value="Genomic_DNA"/>
</dbReference>
<dbReference type="RefSeq" id="WP_012614670.1">
    <property type="nucleotide sequence ID" value="NC_011770.1"/>
</dbReference>
<dbReference type="KEGG" id="pag:PLES_56411"/>
<dbReference type="HOGENOM" id="CLU_106619_2_1_6"/>
<dbReference type="CDD" id="cd18720">
    <property type="entry name" value="PIN_YqxD-like"/>
    <property type="match status" value="1"/>
</dbReference>
<dbReference type="HAMAP" id="MF_00489">
    <property type="entry name" value="UPF0178"/>
    <property type="match status" value="1"/>
</dbReference>
<dbReference type="InterPro" id="IPR003791">
    <property type="entry name" value="UPF0178"/>
</dbReference>
<dbReference type="NCBIfam" id="NF001095">
    <property type="entry name" value="PRK00124.1"/>
    <property type="match status" value="1"/>
</dbReference>
<dbReference type="PANTHER" id="PTHR35146">
    <property type="entry name" value="UPF0178 PROTEIN YAII"/>
    <property type="match status" value="1"/>
</dbReference>
<dbReference type="PANTHER" id="PTHR35146:SF1">
    <property type="entry name" value="UPF0178 PROTEIN YAII"/>
    <property type="match status" value="1"/>
</dbReference>
<dbReference type="Pfam" id="PF02639">
    <property type="entry name" value="DUF188"/>
    <property type="match status" value="1"/>
</dbReference>
<gene>
    <name type="ordered locus">PLES_56411</name>
</gene>
<organism>
    <name type="scientific">Pseudomonas aeruginosa (strain LESB58)</name>
    <dbReference type="NCBI Taxonomy" id="557722"/>
    <lineage>
        <taxon>Bacteria</taxon>
        <taxon>Pseudomonadati</taxon>
        <taxon>Pseudomonadota</taxon>
        <taxon>Gammaproteobacteria</taxon>
        <taxon>Pseudomonadales</taxon>
        <taxon>Pseudomonadaceae</taxon>
        <taxon>Pseudomonas</taxon>
    </lineage>
</organism>